<comment type="function">
    <text evidence="1">Peptide chain release factor 1 directs the termination of translation in response to the peptide chain termination codons UAG and UAA.</text>
</comment>
<comment type="subcellular location">
    <subcellularLocation>
        <location evidence="1">Cytoplasm</location>
    </subcellularLocation>
</comment>
<comment type="PTM">
    <text evidence="1">Methylated by PrmC. Methylation increases the termination efficiency of RF1.</text>
</comment>
<comment type="similarity">
    <text evidence="1">Belongs to the prokaryotic/mitochondrial release factor family.</text>
</comment>
<dbReference type="EMBL" id="CP001111">
    <property type="protein sequence ID" value="ACF50426.1"/>
    <property type="molecule type" value="Genomic_DNA"/>
</dbReference>
<dbReference type="RefSeq" id="WP_012510139.1">
    <property type="nucleotide sequence ID" value="NC_011071.1"/>
</dbReference>
<dbReference type="SMR" id="B4SKS8"/>
<dbReference type="STRING" id="391008.Smal_0721"/>
<dbReference type="KEGG" id="smt:Smal_0721"/>
<dbReference type="eggNOG" id="COG0216">
    <property type="taxonomic scope" value="Bacteria"/>
</dbReference>
<dbReference type="HOGENOM" id="CLU_036856_0_1_6"/>
<dbReference type="OrthoDB" id="9806673at2"/>
<dbReference type="Proteomes" id="UP000001867">
    <property type="component" value="Chromosome"/>
</dbReference>
<dbReference type="GO" id="GO:0005737">
    <property type="term" value="C:cytoplasm"/>
    <property type="evidence" value="ECO:0007669"/>
    <property type="project" value="UniProtKB-SubCell"/>
</dbReference>
<dbReference type="GO" id="GO:0016149">
    <property type="term" value="F:translation release factor activity, codon specific"/>
    <property type="evidence" value="ECO:0007669"/>
    <property type="project" value="UniProtKB-UniRule"/>
</dbReference>
<dbReference type="FunFam" id="3.30.160.20:FF:000004">
    <property type="entry name" value="Peptide chain release factor 1"/>
    <property type="match status" value="1"/>
</dbReference>
<dbReference type="FunFam" id="3.30.70.1660:FF:000002">
    <property type="entry name" value="Peptide chain release factor 1"/>
    <property type="match status" value="1"/>
</dbReference>
<dbReference type="FunFam" id="3.30.70.1660:FF:000004">
    <property type="entry name" value="Peptide chain release factor 1"/>
    <property type="match status" value="1"/>
</dbReference>
<dbReference type="Gene3D" id="3.30.160.20">
    <property type="match status" value="1"/>
</dbReference>
<dbReference type="Gene3D" id="3.30.70.1660">
    <property type="match status" value="2"/>
</dbReference>
<dbReference type="Gene3D" id="6.10.140.1950">
    <property type="match status" value="1"/>
</dbReference>
<dbReference type="HAMAP" id="MF_00093">
    <property type="entry name" value="Rel_fac_1"/>
    <property type="match status" value="1"/>
</dbReference>
<dbReference type="InterPro" id="IPR005139">
    <property type="entry name" value="PCRF"/>
</dbReference>
<dbReference type="InterPro" id="IPR000352">
    <property type="entry name" value="Pep_chain_release_fac_I"/>
</dbReference>
<dbReference type="InterPro" id="IPR045853">
    <property type="entry name" value="Pep_chain_release_fac_I_sf"/>
</dbReference>
<dbReference type="InterPro" id="IPR050057">
    <property type="entry name" value="Prokaryotic/Mito_RF"/>
</dbReference>
<dbReference type="InterPro" id="IPR004373">
    <property type="entry name" value="RF-1"/>
</dbReference>
<dbReference type="NCBIfam" id="TIGR00019">
    <property type="entry name" value="prfA"/>
    <property type="match status" value="1"/>
</dbReference>
<dbReference type="NCBIfam" id="NF001859">
    <property type="entry name" value="PRK00591.1"/>
    <property type="match status" value="1"/>
</dbReference>
<dbReference type="PANTHER" id="PTHR43804">
    <property type="entry name" value="LD18447P"/>
    <property type="match status" value="1"/>
</dbReference>
<dbReference type="PANTHER" id="PTHR43804:SF7">
    <property type="entry name" value="LD18447P"/>
    <property type="match status" value="1"/>
</dbReference>
<dbReference type="Pfam" id="PF03462">
    <property type="entry name" value="PCRF"/>
    <property type="match status" value="1"/>
</dbReference>
<dbReference type="Pfam" id="PF00472">
    <property type="entry name" value="RF-1"/>
    <property type="match status" value="1"/>
</dbReference>
<dbReference type="SMART" id="SM00937">
    <property type="entry name" value="PCRF"/>
    <property type="match status" value="1"/>
</dbReference>
<dbReference type="SUPFAM" id="SSF75620">
    <property type="entry name" value="Release factor"/>
    <property type="match status" value="1"/>
</dbReference>
<dbReference type="PROSITE" id="PS00745">
    <property type="entry name" value="RF_PROK_I"/>
    <property type="match status" value="1"/>
</dbReference>
<proteinExistence type="inferred from homology"/>
<feature type="chain" id="PRO_1000093509" description="Peptide chain release factor 1">
    <location>
        <begin position="1"/>
        <end position="360"/>
    </location>
</feature>
<feature type="region of interest" description="Disordered" evidence="2">
    <location>
        <begin position="281"/>
        <end position="310"/>
    </location>
</feature>
<feature type="modified residue" description="N5-methylglutamine" evidence="1">
    <location>
        <position position="235"/>
    </location>
</feature>
<organism>
    <name type="scientific">Stenotrophomonas maltophilia (strain R551-3)</name>
    <dbReference type="NCBI Taxonomy" id="391008"/>
    <lineage>
        <taxon>Bacteria</taxon>
        <taxon>Pseudomonadati</taxon>
        <taxon>Pseudomonadota</taxon>
        <taxon>Gammaproteobacteria</taxon>
        <taxon>Lysobacterales</taxon>
        <taxon>Lysobacteraceae</taxon>
        <taxon>Stenotrophomonas</taxon>
        <taxon>Stenotrophomonas maltophilia group</taxon>
    </lineage>
</organism>
<name>RF1_STRM5</name>
<protein>
    <recommendedName>
        <fullName evidence="1">Peptide chain release factor 1</fullName>
        <shortName evidence="1">RF-1</shortName>
    </recommendedName>
</protein>
<keyword id="KW-0963">Cytoplasm</keyword>
<keyword id="KW-0488">Methylation</keyword>
<keyword id="KW-0648">Protein biosynthesis</keyword>
<evidence type="ECO:0000255" key="1">
    <source>
        <dbReference type="HAMAP-Rule" id="MF_00093"/>
    </source>
</evidence>
<evidence type="ECO:0000256" key="2">
    <source>
        <dbReference type="SAM" id="MobiDB-lite"/>
    </source>
</evidence>
<sequence>MTPTLRRKLEALAERREELERLLAEPDVVADNTRFRDLSREFAQLEPIATALADETRAKADLAAAEGMRADPDLRELADEEIAAAQARLQELEQELALLLVPRDPRDDGNLFLEVRAGTGGDEAAIFAGDLFRMYARYAERQGWKVEIESDNPGEHGGYKEVVARVVGRGAFSRLKFESGTHRVQRVPATESQGRIHTSAATVAIIPEADEVDDIVINPADLRVDTFRSSGAGGQHVNKTESAIRITHVPTGVVVECQTERSQHANRDKAMKRLKAQLLDAERQRQDAAQAESRRLQVGSGDRSQRIRTYNFPQGRITDHRVEGLTLYDLPNILAGDLDPLLQRLSHEHQVDALAQLSAG</sequence>
<gene>
    <name evidence="1" type="primary">prfA</name>
    <name type="ordered locus">Smal_0721</name>
</gene>
<accession>B4SKS8</accession>
<reference key="1">
    <citation type="submission" date="2008-06" db="EMBL/GenBank/DDBJ databases">
        <title>Complete sequence of Stenotrophomonas maltophilia R551-3.</title>
        <authorList>
            <consortium name="US DOE Joint Genome Institute"/>
            <person name="Lucas S."/>
            <person name="Copeland A."/>
            <person name="Lapidus A."/>
            <person name="Glavina del Rio T."/>
            <person name="Dalin E."/>
            <person name="Tice H."/>
            <person name="Pitluck S."/>
            <person name="Chain P."/>
            <person name="Malfatti S."/>
            <person name="Shin M."/>
            <person name="Vergez L."/>
            <person name="Lang D."/>
            <person name="Schmutz J."/>
            <person name="Larimer F."/>
            <person name="Land M."/>
            <person name="Hauser L."/>
            <person name="Kyrpides N."/>
            <person name="Mikhailova N."/>
            <person name="Taghavi S."/>
            <person name="Monchy S."/>
            <person name="Newman L."/>
            <person name="Vangronsveld J."/>
            <person name="van der Lelie D."/>
            <person name="Richardson P."/>
        </authorList>
    </citation>
    <scope>NUCLEOTIDE SEQUENCE [LARGE SCALE GENOMIC DNA]</scope>
    <source>
        <strain>R551-3</strain>
    </source>
</reference>